<organism>
    <name type="scientific">Bothrops insularis</name>
    <name type="common">Golden lancehead</name>
    <name type="synonym">Lachesis insularis</name>
    <dbReference type="NCBI Taxonomy" id="8723"/>
    <lineage>
        <taxon>Eukaryota</taxon>
        <taxon>Metazoa</taxon>
        <taxon>Chordata</taxon>
        <taxon>Craniata</taxon>
        <taxon>Vertebrata</taxon>
        <taxon>Euteleostomi</taxon>
        <taxon>Lepidosauria</taxon>
        <taxon>Squamata</taxon>
        <taxon>Bifurcata</taxon>
        <taxon>Unidentata</taxon>
        <taxon>Episquamata</taxon>
        <taxon>Toxicofera</taxon>
        <taxon>Serpentes</taxon>
        <taxon>Colubroidea</taxon>
        <taxon>Viperidae</taxon>
        <taxon>Crotalinae</taxon>
        <taxon>Bothrops</taxon>
    </lineage>
</organism>
<name>BPP8_BOTIN</name>
<accession>P30426</accession>
<proteinExistence type="evidence at protein level"/>
<feature type="peptide" id="PRO_0000043512" description="Bradykinin-potentiating peptide S5,1">
    <location>
        <begin position="1"/>
        <end position="10"/>
    </location>
</feature>
<feature type="modified residue" description="Pyrrolidone carboxylic acid" evidence="1">
    <location>
        <position position="1"/>
    </location>
</feature>
<evidence type="ECO:0000269" key="1">
    <source>
    </source>
</evidence>
<evidence type="ECO:0000305" key="2"/>
<dbReference type="PIR" id="H37196">
    <property type="entry name" value="H37196"/>
</dbReference>
<dbReference type="GO" id="GO:0005576">
    <property type="term" value="C:extracellular region"/>
    <property type="evidence" value="ECO:0007669"/>
    <property type="project" value="UniProtKB-SubCell"/>
</dbReference>
<dbReference type="GO" id="GO:0030414">
    <property type="term" value="F:peptidase inhibitor activity"/>
    <property type="evidence" value="ECO:0007669"/>
    <property type="project" value="UniProtKB-KW"/>
</dbReference>
<dbReference type="GO" id="GO:0090729">
    <property type="term" value="F:toxin activity"/>
    <property type="evidence" value="ECO:0007669"/>
    <property type="project" value="UniProtKB-KW"/>
</dbReference>
<dbReference type="GO" id="GO:0008217">
    <property type="term" value="P:regulation of blood pressure"/>
    <property type="evidence" value="ECO:0007669"/>
    <property type="project" value="UniProtKB-KW"/>
</dbReference>
<protein>
    <recommendedName>
        <fullName>Bradykinin-potentiating peptide S5,1</fullName>
        <shortName>BPP</shortName>
    </recommendedName>
    <alternativeName>
        <fullName>Angiotensin-converting enzyme inhibitor</fullName>
    </alternativeName>
</protein>
<reference key="1">
    <citation type="journal article" date="1990" name="J. Protein Chem.">
        <title>Primary structure and biological activity of bradykinin potentiating peptides from Bothrops insularis snake venom.</title>
        <authorList>
            <person name="Cintra A.C.O."/>
            <person name="Vieira C.A."/>
            <person name="Giglio J.R."/>
        </authorList>
    </citation>
    <scope>PROTEIN SEQUENCE</scope>
    <scope>PYROGLUTAMATE FORMATION AT GLN-1</scope>
    <source>
        <tissue>Venom</tissue>
    </source>
</reference>
<keyword id="KW-0903">Direct protein sequencing</keyword>
<keyword id="KW-0382">Hypotensive agent</keyword>
<keyword id="KW-0481">Metalloenzyme inhibitor</keyword>
<keyword id="KW-0483">Metalloprotease inhibitor</keyword>
<keyword id="KW-0646">Protease inhibitor</keyword>
<keyword id="KW-0873">Pyrrolidone carboxylic acid</keyword>
<keyword id="KW-0964">Secreted</keyword>
<keyword id="KW-0800">Toxin</keyword>
<comment type="function">
    <text>This peptide both inhibits the activity of the angiotensin-converting enzyme (ACE) and enhances the action of bradykinin by inhibiting the peptidases that inactivate it. It acts as an indirect hypotensive agent.</text>
</comment>
<comment type="subcellular location">
    <subcellularLocation>
        <location>Secreted</location>
    </subcellularLocation>
</comment>
<comment type="tissue specificity">
    <text>Expressed by the venom gland.</text>
</comment>
<comment type="similarity">
    <text evidence="2">Belongs to the bradykinin-potentiating peptide family.</text>
</comment>
<sequence length="10" mass="1173">QWGQHPNIPP</sequence>